<comment type="function">
    <text evidence="1">Zinc phosphodiesterase, which displays some tRNA 3'-processing endonuclease activity. Probably involved in tRNA maturation, by removing a 3'-trailer from precursor tRNA.</text>
</comment>
<comment type="catalytic activity">
    <reaction evidence="1">
        <text>Endonucleolytic cleavage of RNA, removing extra 3' nucleotides from tRNA precursor, generating 3' termini of tRNAs. A 3'-hydroxy group is left at the tRNA terminus and a 5'-phosphoryl group is left at the trailer molecule.</text>
        <dbReference type="EC" id="3.1.26.11"/>
    </reaction>
</comment>
<comment type="cofactor">
    <cofactor evidence="1">
        <name>Zn(2+)</name>
        <dbReference type="ChEBI" id="CHEBI:29105"/>
    </cofactor>
    <text evidence="1">Binds 2 Zn(2+) ions.</text>
</comment>
<comment type="subunit">
    <text evidence="1">Homodimer.</text>
</comment>
<comment type="similarity">
    <text evidence="1">Belongs to the RNase Z family.</text>
</comment>
<protein>
    <recommendedName>
        <fullName evidence="1">Ribonuclease Z</fullName>
        <shortName evidence="1">RNase Z</shortName>
        <ecNumber evidence="1">3.1.26.11</ecNumber>
    </recommendedName>
    <alternativeName>
        <fullName evidence="1">tRNA 3 endonuclease</fullName>
    </alternativeName>
    <alternativeName>
        <fullName evidence="1">tRNase Z</fullName>
    </alternativeName>
</protein>
<evidence type="ECO:0000255" key="1">
    <source>
        <dbReference type="HAMAP-Rule" id="MF_01818"/>
    </source>
</evidence>
<accession>Q5YQ00</accession>
<dbReference type="EC" id="3.1.26.11" evidence="1"/>
<dbReference type="EMBL" id="AP006618">
    <property type="protein sequence ID" value="BAD59741.1"/>
    <property type="molecule type" value="Genomic_DNA"/>
</dbReference>
<dbReference type="RefSeq" id="WP_011211424.1">
    <property type="nucleotide sequence ID" value="NC_006361.1"/>
</dbReference>
<dbReference type="SMR" id="Q5YQ00"/>
<dbReference type="STRING" id="247156.NFA_48890"/>
<dbReference type="GeneID" id="61135485"/>
<dbReference type="KEGG" id="nfa:NFA_48890"/>
<dbReference type="eggNOG" id="COG1234">
    <property type="taxonomic scope" value="Bacteria"/>
</dbReference>
<dbReference type="HOGENOM" id="CLU_031317_2_1_11"/>
<dbReference type="OrthoDB" id="9800940at2"/>
<dbReference type="Proteomes" id="UP000006820">
    <property type="component" value="Chromosome"/>
</dbReference>
<dbReference type="GO" id="GO:0042781">
    <property type="term" value="F:3'-tRNA processing endoribonuclease activity"/>
    <property type="evidence" value="ECO:0007669"/>
    <property type="project" value="UniProtKB-UniRule"/>
</dbReference>
<dbReference type="GO" id="GO:0008270">
    <property type="term" value="F:zinc ion binding"/>
    <property type="evidence" value="ECO:0007669"/>
    <property type="project" value="UniProtKB-UniRule"/>
</dbReference>
<dbReference type="CDD" id="cd07717">
    <property type="entry name" value="RNaseZ_ZiPD-like_MBL-fold"/>
    <property type="match status" value="1"/>
</dbReference>
<dbReference type="Gene3D" id="3.60.15.10">
    <property type="entry name" value="Ribonuclease Z/Hydroxyacylglutathione hydrolase-like"/>
    <property type="match status" value="1"/>
</dbReference>
<dbReference type="HAMAP" id="MF_01818">
    <property type="entry name" value="RNase_Z_BN"/>
    <property type="match status" value="1"/>
</dbReference>
<dbReference type="InterPro" id="IPR001279">
    <property type="entry name" value="Metallo-B-lactamas"/>
</dbReference>
<dbReference type="InterPro" id="IPR036866">
    <property type="entry name" value="RibonucZ/Hydroxyglut_hydro"/>
</dbReference>
<dbReference type="InterPro" id="IPR013471">
    <property type="entry name" value="RNase_Z/BN"/>
</dbReference>
<dbReference type="NCBIfam" id="NF000805">
    <property type="entry name" value="PRK00055.2-3"/>
    <property type="match status" value="1"/>
</dbReference>
<dbReference type="PANTHER" id="PTHR46018">
    <property type="entry name" value="ZINC PHOSPHODIESTERASE ELAC PROTEIN 1"/>
    <property type="match status" value="1"/>
</dbReference>
<dbReference type="PANTHER" id="PTHR46018:SF2">
    <property type="entry name" value="ZINC PHOSPHODIESTERASE ELAC PROTEIN 1"/>
    <property type="match status" value="1"/>
</dbReference>
<dbReference type="Pfam" id="PF00753">
    <property type="entry name" value="Lactamase_B"/>
    <property type="match status" value="1"/>
</dbReference>
<dbReference type="Pfam" id="PF12706">
    <property type="entry name" value="Lactamase_B_2"/>
    <property type="match status" value="1"/>
</dbReference>
<dbReference type="SMART" id="SM00849">
    <property type="entry name" value="Lactamase_B"/>
    <property type="match status" value="1"/>
</dbReference>
<dbReference type="SUPFAM" id="SSF56281">
    <property type="entry name" value="Metallo-hydrolase/oxidoreductase"/>
    <property type="match status" value="1"/>
</dbReference>
<sequence>MSQRELVVLGTASQVPTRQRNHNGYLLRWGREGVLFDPGEGTQRQMAFAGVAATDITRIALTHFHGDHCLGLPGIVQRINLDRVAHPVDAYYPASGQEYFDRLCSASSFYRRVDLRTHPIAGPGPLDAPDAPFTIEAVALSHPVEAFGYRLTEPAGVRMLPDRLAALGIHGPRIGELQRAGSLLVDGRTVTVAEVSEPRPGQSFAFVMDTRLCPGVAELAAGVDMLVIEATFLDADAHLAEEYGHLTAGQAARVAADADVRTLVLTHFSQRYRTLDDHRAEAEKHFSGEVVVAEDLHRIPLPPRR</sequence>
<gene>
    <name evidence="1" type="primary">rnz</name>
    <name type="ordered locus">NFA_48890</name>
</gene>
<reference key="1">
    <citation type="journal article" date="2004" name="Proc. Natl. Acad. Sci. U.S.A.">
        <title>The complete genomic sequence of Nocardia farcinica IFM 10152.</title>
        <authorList>
            <person name="Ishikawa J."/>
            <person name="Yamashita A."/>
            <person name="Mikami Y."/>
            <person name="Hoshino Y."/>
            <person name="Kurita H."/>
            <person name="Hotta K."/>
            <person name="Shiba T."/>
            <person name="Hattori M."/>
        </authorList>
    </citation>
    <scope>NUCLEOTIDE SEQUENCE [LARGE SCALE GENOMIC DNA]</scope>
    <source>
        <strain>IFM 10152</strain>
    </source>
</reference>
<feature type="chain" id="PRO_0000155880" description="Ribonuclease Z">
    <location>
        <begin position="1"/>
        <end position="305"/>
    </location>
</feature>
<feature type="active site" description="Proton acceptor" evidence="1">
    <location>
        <position position="67"/>
    </location>
</feature>
<feature type="binding site" evidence="1">
    <location>
        <position position="63"/>
    </location>
    <ligand>
        <name>Zn(2+)</name>
        <dbReference type="ChEBI" id="CHEBI:29105"/>
        <label>1</label>
        <note>catalytic</note>
    </ligand>
</feature>
<feature type="binding site" evidence="1">
    <location>
        <position position="65"/>
    </location>
    <ligand>
        <name>Zn(2+)</name>
        <dbReference type="ChEBI" id="CHEBI:29105"/>
        <label>1</label>
        <note>catalytic</note>
    </ligand>
</feature>
<feature type="binding site" evidence="1">
    <location>
        <position position="67"/>
    </location>
    <ligand>
        <name>Zn(2+)</name>
        <dbReference type="ChEBI" id="CHEBI:29105"/>
        <label>2</label>
        <note>catalytic</note>
    </ligand>
</feature>
<feature type="binding site" evidence="1">
    <location>
        <position position="68"/>
    </location>
    <ligand>
        <name>Zn(2+)</name>
        <dbReference type="ChEBI" id="CHEBI:29105"/>
        <label>2</label>
        <note>catalytic</note>
    </ligand>
</feature>
<feature type="binding site" evidence="1">
    <location>
        <position position="142"/>
    </location>
    <ligand>
        <name>Zn(2+)</name>
        <dbReference type="ChEBI" id="CHEBI:29105"/>
        <label>1</label>
        <note>catalytic</note>
    </ligand>
</feature>
<feature type="binding site" evidence="1">
    <location>
        <position position="209"/>
    </location>
    <ligand>
        <name>Zn(2+)</name>
        <dbReference type="ChEBI" id="CHEBI:29105"/>
        <label>1</label>
        <note>catalytic</note>
    </ligand>
</feature>
<feature type="binding site" evidence="1">
    <location>
        <position position="209"/>
    </location>
    <ligand>
        <name>Zn(2+)</name>
        <dbReference type="ChEBI" id="CHEBI:29105"/>
        <label>2</label>
        <note>catalytic</note>
    </ligand>
</feature>
<feature type="binding site" evidence="1">
    <location>
        <position position="267"/>
    </location>
    <ligand>
        <name>Zn(2+)</name>
        <dbReference type="ChEBI" id="CHEBI:29105"/>
        <label>2</label>
        <note>catalytic</note>
    </ligand>
</feature>
<name>RNZ_NOCFA</name>
<proteinExistence type="inferred from homology"/>
<keyword id="KW-0255">Endonuclease</keyword>
<keyword id="KW-0378">Hydrolase</keyword>
<keyword id="KW-0479">Metal-binding</keyword>
<keyword id="KW-0540">Nuclease</keyword>
<keyword id="KW-1185">Reference proteome</keyword>
<keyword id="KW-0819">tRNA processing</keyword>
<keyword id="KW-0862">Zinc</keyword>
<organism>
    <name type="scientific">Nocardia farcinica (strain IFM 10152)</name>
    <dbReference type="NCBI Taxonomy" id="247156"/>
    <lineage>
        <taxon>Bacteria</taxon>
        <taxon>Bacillati</taxon>
        <taxon>Actinomycetota</taxon>
        <taxon>Actinomycetes</taxon>
        <taxon>Mycobacteriales</taxon>
        <taxon>Nocardiaceae</taxon>
        <taxon>Nocardia</taxon>
    </lineage>
</organism>